<feature type="chain" id="PRO_1000071336" description="S-adenosylmethionine:tRNA ribosyltransferase-isomerase">
    <location>
        <begin position="1"/>
        <end position="341"/>
    </location>
</feature>
<sequence length="341" mass="38364">MQLSDFDFELPEELIAQEPIKQRDQSRLMIVHRDIDRTEHKTFKDLLQYLQPGDVLVMNDSKVLPARIYGEKVSTGAKIEVLLLRQISANQWETLVKPGKRAKIGEILDFGSGKMKGKIVDHTDVGGRVIEFSCQEPFLQVLEQIGSMPLPPYIKKPLTDKQRYQTVYARQEGSAAAPTAGLHFTRELLEEIRNRGVSIVTVLLHVGLGTFRPVQVEDVTSHRMHEEYYEITPQAAEEINQAKLRGGRVIAVGTTSVRCLETSSNEAGQVLPGSGFTDIFIYPGYQFKVIEGLVTNFHLPKSSLLMLISALAGREKILKAYQQAVTEQYRFFSFGDAMLII</sequence>
<accession>A4J540</accession>
<comment type="function">
    <text evidence="1">Transfers and isomerizes the ribose moiety from AdoMet to the 7-aminomethyl group of 7-deazaguanine (preQ1-tRNA) to give epoxyqueuosine (oQ-tRNA).</text>
</comment>
<comment type="catalytic activity">
    <reaction evidence="1">
        <text>7-aminomethyl-7-carbaguanosine(34) in tRNA + S-adenosyl-L-methionine = epoxyqueuosine(34) in tRNA + adenine + L-methionine + 2 H(+)</text>
        <dbReference type="Rhea" id="RHEA:32155"/>
        <dbReference type="Rhea" id="RHEA-COMP:10342"/>
        <dbReference type="Rhea" id="RHEA-COMP:18582"/>
        <dbReference type="ChEBI" id="CHEBI:15378"/>
        <dbReference type="ChEBI" id="CHEBI:16708"/>
        <dbReference type="ChEBI" id="CHEBI:57844"/>
        <dbReference type="ChEBI" id="CHEBI:59789"/>
        <dbReference type="ChEBI" id="CHEBI:82833"/>
        <dbReference type="ChEBI" id="CHEBI:194443"/>
        <dbReference type="EC" id="2.4.99.17"/>
    </reaction>
</comment>
<comment type="pathway">
    <text evidence="1">tRNA modification; tRNA-queuosine biosynthesis.</text>
</comment>
<comment type="subunit">
    <text evidence="1">Monomer.</text>
</comment>
<comment type="subcellular location">
    <subcellularLocation>
        <location evidence="1">Cytoplasm</location>
    </subcellularLocation>
</comment>
<comment type="similarity">
    <text evidence="1">Belongs to the QueA family.</text>
</comment>
<dbReference type="EC" id="2.4.99.17" evidence="1"/>
<dbReference type="EMBL" id="CP000612">
    <property type="protein sequence ID" value="ABO50193.1"/>
    <property type="molecule type" value="Genomic_DNA"/>
</dbReference>
<dbReference type="RefSeq" id="WP_011878008.1">
    <property type="nucleotide sequence ID" value="NC_009253.1"/>
</dbReference>
<dbReference type="SMR" id="A4J540"/>
<dbReference type="STRING" id="349161.Dred_1665"/>
<dbReference type="KEGG" id="drm:Dred_1665"/>
<dbReference type="eggNOG" id="COG0809">
    <property type="taxonomic scope" value="Bacteria"/>
</dbReference>
<dbReference type="HOGENOM" id="CLU_039110_1_0_9"/>
<dbReference type="OrthoDB" id="9805933at2"/>
<dbReference type="UniPathway" id="UPA00392"/>
<dbReference type="Proteomes" id="UP000001556">
    <property type="component" value="Chromosome"/>
</dbReference>
<dbReference type="GO" id="GO:0005737">
    <property type="term" value="C:cytoplasm"/>
    <property type="evidence" value="ECO:0007669"/>
    <property type="project" value="UniProtKB-SubCell"/>
</dbReference>
<dbReference type="GO" id="GO:0051075">
    <property type="term" value="F:S-adenosylmethionine:tRNA ribosyltransferase-isomerase activity"/>
    <property type="evidence" value="ECO:0007669"/>
    <property type="project" value="UniProtKB-EC"/>
</dbReference>
<dbReference type="GO" id="GO:0008616">
    <property type="term" value="P:queuosine biosynthetic process"/>
    <property type="evidence" value="ECO:0007669"/>
    <property type="project" value="UniProtKB-UniRule"/>
</dbReference>
<dbReference type="GO" id="GO:0002099">
    <property type="term" value="P:tRNA wobble guanine modification"/>
    <property type="evidence" value="ECO:0007669"/>
    <property type="project" value="TreeGrafter"/>
</dbReference>
<dbReference type="FunFam" id="2.40.10.240:FF:000002">
    <property type="entry name" value="S-adenosylmethionine:tRNA ribosyltransferase-isomerase"/>
    <property type="match status" value="1"/>
</dbReference>
<dbReference type="FunFam" id="3.40.1780.10:FF:000001">
    <property type="entry name" value="S-adenosylmethionine:tRNA ribosyltransferase-isomerase"/>
    <property type="match status" value="1"/>
</dbReference>
<dbReference type="Gene3D" id="2.40.10.240">
    <property type="entry name" value="QueA-like"/>
    <property type="match status" value="1"/>
</dbReference>
<dbReference type="Gene3D" id="3.40.1780.10">
    <property type="entry name" value="QueA-like"/>
    <property type="match status" value="1"/>
</dbReference>
<dbReference type="HAMAP" id="MF_00113">
    <property type="entry name" value="QueA"/>
    <property type="match status" value="1"/>
</dbReference>
<dbReference type="InterPro" id="IPR003699">
    <property type="entry name" value="QueA"/>
</dbReference>
<dbReference type="InterPro" id="IPR042118">
    <property type="entry name" value="QueA_dom1"/>
</dbReference>
<dbReference type="InterPro" id="IPR042119">
    <property type="entry name" value="QueA_dom2"/>
</dbReference>
<dbReference type="InterPro" id="IPR036100">
    <property type="entry name" value="QueA_sf"/>
</dbReference>
<dbReference type="NCBIfam" id="NF001140">
    <property type="entry name" value="PRK00147.1"/>
    <property type="match status" value="1"/>
</dbReference>
<dbReference type="NCBIfam" id="TIGR00113">
    <property type="entry name" value="queA"/>
    <property type="match status" value="1"/>
</dbReference>
<dbReference type="PANTHER" id="PTHR30307">
    <property type="entry name" value="S-ADENOSYLMETHIONINE:TRNA RIBOSYLTRANSFERASE-ISOMERASE"/>
    <property type="match status" value="1"/>
</dbReference>
<dbReference type="PANTHER" id="PTHR30307:SF0">
    <property type="entry name" value="S-ADENOSYLMETHIONINE:TRNA RIBOSYLTRANSFERASE-ISOMERASE"/>
    <property type="match status" value="1"/>
</dbReference>
<dbReference type="Pfam" id="PF02547">
    <property type="entry name" value="Queuosine_synth"/>
    <property type="match status" value="1"/>
</dbReference>
<dbReference type="SUPFAM" id="SSF111337">
    <property type="entry name" value="QueA-like"/>
    <property type="match status" value="1"/>
</dbReference>
<name>QUEA_DESRM</name>
<gene>
    <name evidence="1" type="primary">queA</name>
    <name type="ordered locus">Dred_1665</name>
</gene>
<protein>
    <recommendedName>
        <fullName evidence="1">S-adenosylmethionine:tRNA ribosyltransferase-isomerase</fullName>
        <ecNumber evidence="1">2.4.99.17</ecNumber>
    </recommendedName>
    <alternativeName>
        <fullName evidence="1">Queuosine biosynthesis protein QueA</fullName>
    </alternativeName>
</protein>
<evidence type="ECO:0000255" key="1">
    <source>
        <dbReference type="HAMAP-Rule" id="MF_00113"/>
    </source>
</evidence>
<reference key="1">
    <citation type="submission" date="2007-03" db="EMBL/GenBank/DDBJ databases">
        <title>Complete sequence of Desulfotomaculum reducens MI-1.</title>
        <authorList>
            <consortium name="US DOE Joint Genome Institute"/>
            <person name="Copeland A."/>
            <person name="Lucas S."/>
            <person name="Lapidus A."/>
            <person name="Barry K."/>
            <person name="Detter J.C."/>
            <person name="Glavina del Rio T."/>
            <person name="Hammon N."/>
            <person name="Israni S."/>
            <person name="Dalin E."/>
            <person name="Tice H."/>
            <person name="Pitluck S."/>
            <person name="Sims D."/>
            <person name="Brettin T."/>
            <person name="Bruce D."/>
            <person name="Han C."/>
            <person name="Tapia R."/>
            <person name="Schmutz J."/>
            <person name="Larimer F."/>
            <person name="Land M."/>
            <person name="Hauser L."/>
            <person name="Kyrpides N."/>
            <person name="Kim E."/>
            <person name="Tebo B.M."/>
            <person name="Richardson P."/>
        </authorList>
    </citation>
    <scope>NUCLEOTIDE SEQUENCE [LARGE SCALE GENOMIC DNA]</scope>
    <source>
        <strain>ATCC BAA-1160 / DSM 100696 / MI-1</strain>
    </source>
</reference>
<proteinExistence type="inferred from homology"/>
<keyword id="KW-0963">Cytoplasm</keyword>
<keyword id="KW-0671">Queuosine biosynthesis</keyword>
<keyword id="KW-1185">Reference proteome</keyword>
<keyword id="KW-0949">S-adenosyl-L-methionine</keyword>
<keyword id="KW-0808">Transferase</keyword>
<organism>
    <name type="scientific">Desulforamulus reducens (strain ATCC BAA-1160 / DSM 100696 / MI-1)</name>
    <name type="common">Desulfotomaculum reducens</name>
    <dbReference type="NCBI Taxonomy" id="349161"/>
    <lineage>
        <taxon>Bacteria</taxon>
        <taxon>Bacillati</taxon>
        <taxon>Bacillota</taxon>
        <taxon>Clostridia</taxon>
        <taxon>Eubacteriales</taxon>
        <taxon>Peptococcaceae</taxon>
        <taxon>Desulforamulus</taxon>
    </lineage>
</organism>